<gene>
    <name evidence="1" type="primary">slyX</name>
    <name type="ordered locus">SeHA_C3759</name>
</gene>
<accession>B4TKM9</accession>
<proteinExistence type="inferred from homology"/>
<evidence type="ECO:0000255" key="1">
    <source>
        <dbReference type="HAMAP-Rule" id="MF_00715"/>
    </source>
</evidence>
<evidence type="ECO:0000256" key="2">
    <source>
        <dbReference type="SAM" id="MobiDB-lite"/>
    </source>
</evidence>
<sequence>MQDITMEARLAELESRLAFQEITIEELNLTVTAHEMEMAKLRDHLRLLTEKLKASQPSNIASQAEETPPPHY</sequence>
<comment type="similarity">
    <text evidence="1">Belongs to the SlyX family.</text>
</comment>
<protein>
    <recommendedName>
        <fullName evidence="1">Protein SlyX</fullName>
    </recommendedName>
</protein>
<organism>
    <name type="scientific">Salmonella heidelberg (strain SL476)</name>
    <dbReference type="NCBI Taxonomy" id="454169"/>
    <lineage>
        <taxon>Bacteria</taxon>
        <taxon>Pseudomonadati</taxon>
        <taxon>Pseudomonadota</taxon>
        <taxon>Gammaproteobacteria</taxon>
        <taxon>Enterobacterales</taxon>
        <taxon>Enterobacteriaceae</taxon>
        <taxon>Salmonella</taxon>
    </lineage>
</organism>
<feature type="chain" id="PRO_1000195853" description="Protein SlyX">
    <location>
        <begin position="1"/>
        <end position="72"/>
    </location>
</feature>
<feature type="region of interest" description="Disordered" evidence="2">
    <location>
        <begin position="53"/>
        <end position="72"/>
    </location>
</feature>
<feature type="compositionally biased region" description="Polar residues" evidence="2">
    <location>
        <begin position="55"/>
        <end position="65"/>
    </location>
</feature>
<dbReference type="EMBL" id="CP001120">
    <property type="protein sequence ID" value="ACF66781.1"/>
    <property type="molecule type" value="Genomic_DNA"/>
</dbReference>
<dbReference type="RefSeq" id="WP_001152701.1">
    <property type="nucleotide sequence ID" value="NC_011083.1"/>
</dbReference>
<dbReference type="SMR" id="B4TKM9"/>
<dbReference type="KEGG" id="seh:SeHA_C3759"/>
<dbReference type="HOGENOM" id="CLU_180796_4_2_6"/>
<dbReference type="Proteomes" id="UP000001866">
    <property type="component" value="Chromosome"/>
</dbReference>
<dbReference type="Gene3D" id="1.20.5.300">
    <property type="match status" value="1"/>
</dbReference>
<dbReference type="HAMAP" id="MF_00715">
    <property type="entry name" value="SlyX"/>
    <property type="match status" value="1"/>
</dbReference>
<dbReference type="InterPro" id="IPR007236">
    <property type="entry name" value="SlyX"/>
</dbReference>
<dbReference type="NCBIfam" id="NF002750">
    <property type="entry name" value="PRK02793.1"/>
    <property type="match status" value="1"/>
</dbReference>
<dbReference type="PANTHER" id="PTHR36508">
    <property type="entry name" value="PROTEIN SLYX"/>
    <property type="match status" value="1"/>
</dbReference>
<dbReference type="PANTHER" id="PTHR36508:SF1">
    <property type="entry name" value="PROTEIN SLYX"/>
    <property type="match status" value="1"/>
</dbReference>
<dbReference type="Pfam" id="PF04102">
    <property type="entry name" value="SlyX"/>
    <property type="match status" value="1"/>
</dbReference>
<reference key="1">
    <citation type="journal article" date="2011" name="J. Bacteriol.">
        <title>Comparative genomics of 28 Salmonella enterica isolates: evidence for CRISPR-mediated adaptive sublineage evolution.</title>
        <authorList>
            <person name="Fricke W.F."/>
            <person name="Mammel M.K."/>
            <person name="McDermott P.F."/>
            <person name="Tartera C."/>
            <person name="White D.G."/>
            <person name="Leclerc J.E."/>
            <person name="Ravel J."/>
            <person name="Cebula T.A."/>
        </authorList>
    </citation>
    <scope>NUCLEOTIDE SEQUENCE [LARGE SCALE GENOMIC DNA]</scope>
    <source>
        <strain>SL476</strain>
    </source>
</reference>
<name>SLYX_SALHS</name>